<dbReference type="EMBL" id="BC126843">
    <property type="protein sequence ID" value="AAI26844.1"/>
    <property type="molecule type" value="mRNA"/>
</dbReference>
<dbReference type="RefSeq" id="NP_001073735.1">
    <property type="nucleotide sequence ID" value="NM_001080266.1"/>
</dbReference>
<dbReference type="SMR" id="A1A4R8"/>
<dbReference type="FunCoup" id="A1A4R8">
    <property type="interactions" value="3105"/>
</dbReference>
<dbReference type="STRING" id="9913.ENSBTAP00000011540"/>
<dbReference type="PaxDb" id="9913-ENSBTAP00000011540"/>
<dbReference type="GeneID" id="512651"/>
<dbReference type="KEGG" id="bta:512651"/>
<dbReference type="CTD" id="8697"/>
<dbReference type="VEuPathDB" id="HostDB:ENSBTAG00000008759"/>
<dbReference type="eggNOG" id="KOG1155">
    <property type="taxonomic scope" value="Eukaryota"/>
</dbReference>
<dbReference type="HOGENOM" id="CLU_018320_3_0_1"/>
<dbReference type="InParanoid" id="A1A4R8"/>
<dbReference type="OMA" id="ERCLYHS"/>
<dbReference type="OrthoDB" id="10262026at2759"/>
<dbReference type="TreeFam" id="TF101055"/>
<dbReference type="Reactome" id="R-BTA-141430">
    <property type="pathway name" value="Inactivation of APC/C via direct inhibition of the APC/C complex"/>
</dbReference>
<dbReference type="Reactome" id="R-BTA-174048">
    <property type="pathway name" value="APC/C:Cdc20 mediated degradation of Cyclin B"/>
</dbReference>
<dbReference type="Reactome" id="R-BTA-174084">
    <property type="pathway name" value="Autodegradation of Cdh1 by Cdh1:APC/C"/>
</dbReference>
<dbReference type="Reactome" id="R-BTA-174154">
    <property type="pathway name" value="APC/C:Cdc20 mediated degradation of Securin"/>
</dbReference>
<dbReference type="Reactome" id="R-BTA-174178">
    <property type="pathway name" value="APC/C:Cdh1 mediated degradation of Cdc20 and other APC/C:Cdh1 targeted proteins in late mitosis/early G1"/>
</dbReference>
<dbReference type="Reactome" id="R-BTA-174184">
    <property type="pathway name" value="Cdc20:Phospho-APC/C mediated degradation of Cyclin A"/>
</dbReference>
<dbReference type="Reactome" id="R-BTA-176407">
    <property type="pathway name" value="Conversion from APC/C:Cdc20 to APC/C:Cdh1 in late anaphase"/>
</dbReference>
<dbReference type="Reactome" id="R-BTA-176408">
    <property type="pathway name" value="Regulation of APC/C activators between G1/S and early anaphase"/>
</dbReference>
<dbReference type="Reactome" id="R-BTA-176409">
    <property type="pathway name" value="APC/C:Cdc20 mediated degradation of mitotic proteins"/>
</dbReference>
<dbReference type="Reactome" id="R-BTA-176412">
    <property type="pathway name" value="Phosphorylation of the APC/C"/>
</dbReference>
<dbReference type="Reactome" id="R-BTA-179409">
    <property type="pathway name" value="APC-Cdc20 mediated degradation of Nek2A"/>
</dbReference>
<dbReference type="Reactome" id="R-BTA-2467813">
    <property type="pathway name" value="Separation of Sister Chromatids"/>
</dbReference>
<dbReference type="Reactome" id="R-BTA-2559582">
    <property type="pathway name" value="Senescence-Associated Secretory Phenotype (SASP)"/>
</dbReference>
<dbReference type="Reactome" id="R-BTA-68867">
    <property type="pathway name" value="Assembly of the pre-replicative complex"/>
</dbReference>
<dbReference type="Reactome" id="R-BTA-69017">
    <property type="pathway name" value="CDK-mediated phosphorylation and removal of Cdc6"/>
</dbReference>
<dbReference type="Reactome" id="R-BTA-983168">
    <property type="pathway name" value="Antigen processing: Ubiquitination &amp; Proteasome degradation"/>
</dbReference>
<dbReference type="UniPathway" id="UPA00143"/>
<dbReference type="Proteomes" id="UP000009136">
    <property type="component" value="Chromosome 7"/>
</dbReference>
<dbReference type="Bgee" id="ENSBTAG00000008759">
    <property type="expression patterns" value="Expressed in tongue muscle and 106 other cell types or tissues"/>
</dbReference>
<dbReference type="GO" id="GO:0005680">
    <property type="term" value="C:anaphase-promoting complex"/>
    <property type="evidence" value="ECO:0000250"/>
    <property type="project" value="UniProtKB"/>
</dbReference>
<dbReference type="GO" id="GO:0031145">
    <property type="term" value="P:anaphase-promoting complex-dependent catabolic process"/>
    <property type="evidence" value="ECO:0000250"/>
    <property type="project" value="UniProtKB"/>
</dbReference>
<dbReference type="GO" id="GO:0051301">
    <property type="term" value="P:cell division"/>
    <property type="evidence" value="ECO:0000318"/>
    <property type="project" value="GO_Central"/>
</dbReference>
<dbReference type="GO" id="GO:0045842">
    <property type="term" value="P:positive regulation of mitotic metaphase/anaphase transition"/>
    <property type="evidence" value="ECO:0000318"/>
    <property type="project" value="GO_Central"/>
</dbReference>
<dbReference type="GO" id="GO:0141198">
    <property type="term" value="P:protein branched polyubiquitination"/>
    <property type="evidence" value="ECO:0000250"/>
    <property type="project" value="UniProtKB"/>
</dbReference>
<dbReference type="GO" id="GO:0070979">
    <property type="term" value="P:protein K11-linked ubiquitination"/>
    <property type="evidence" value="ECO:0000250"/>
    <property type="project" value="UniProtKB"/>
</dbReference>
<dbReference type="GO" id="GO:0070936">
    <property type="term" value="P:protein K48-linked ubiquitination"/>
    <property type="evidence" value="ECO:0000250"/>
    <property type="project" value="UniProtKB"/>
</dbReference>
<dbReference type="GO" id="GO:0016567">
    <property type="term" value="P:protein ubiquitination"/>
    <property type="evidence" value="ECO:0000318"/>
    <property type="project" value="GO_Central"/>
</dbReference>
<dbReference type="FunFam" id="1.25.40.10:FF:000093">
    <property type="entry name" value="cell division cycle protein 23 homolog"/>
    <property type="match status" value="1"/>
</dbReference>
<dbReference type="FunFam" id="1.25.40.10:FF:000187">
    <property type="entry name" value="cell division cycle protein 23 homolog"/>
    <property type="match status" value="1"/>
</dbReference>
<dbReference type="Gene3D" id="1.25.40.10">
    <property type="entry name" value="Tetratricopeptide repeat domain"/>
    <property type="match status" value="2"/>
</dbReference>
<dbReference type="InterPro" id="IPR007192">
    <property type="entry name" value="APC8"/>
</dbReference>
<dbReference type="InterPro" id="IPR011990">
    <property type="entry name" value="TPR-like_helical_dom_sf"/>
</dbReference>
<dbReference type="InterPro" id="IPR019734">
    <property type="entry name" value="TPR_rpt"/>
</dbReference>
<dbReference type="PANTHER" id="PTHR12558">
    <property type="entry name" value="CELL DIVISION CYCLE 16,23,27"/>
    <property type="match status" value="1"/>
</dbReference>
<dbReference type="PANTHER" id="PTHR12558:SF10">
    <property type="entry name" value="CELL DIVISION CYCLE PROTEIN 23 HOMOLOG"/>
    <property type="match status" value="1"/>
</dbReference>
<dbReference type="Pfam" id="PF04049">
    <property type="entry name" value="ANAPC8"/>
    <property type="match status" value="1"/>
</dbReference>
<dbReference type="Pfam" id="PF13414">
    <property type="entry name" value="TPR_11"/>
    <property type="match status" value="1"/>
</dbReference>
<dbReference type="Pfam" id="PF13181">
    <property type="entry name" value="TPR_8"/>
    <property type="match status" value="1"/>
</dbReference>
<dbReference type="SMART" id="SM00028">
    <property type="entry name" value="TPR"/>
    <property type="match status" value="7"/>
</dbReference>
<dbReference type="SUPFAM" id="SSF48452">
    <property type="entry name" value="TPR-like"/>
    <property type="match status" value="2"/>
</dbReference>
<dbReference type="PROSITE" id="PS50005">
    <property type="entry name" value="TPR"/>
    <property type="match status" value="6"/>
</dbReference>
<dbReference type="PROSITE" id="PS50293">
    <property type="entry name" value="TPR_REGION"/>
    <property type="match status" value="1"/>
</dbReference>
<evidence type="ECO:0000250" key="1"/>
<evidence type="ECO:0000250" key="2">
    <source>
        <dbReference type="UniProtKB" id="Q9UJX2"/>
    </source>
</evidence>
<evidence type="ECO:0000305" key="3"/>
<sequence length="597" mass="68780">MAASSSIVSVAPTASSVPVLPSSCDFSNLREIKKQLLLIAGLTRERGLLHSSKWSAELAFSLPALPLSELQPPPPITEEDAQDMDAYTLAKAYFDVKEYDRAAHFLHGCNSKKAYFLYMYSRYLSGEKKKDDETVDSLGPLEKGQVKNEALRELRVELSKKHQARELDGFGLYLYGVVLRKLDLVKEAIDVFVEATHVLPLHWGAWLELCNLITDKEMLKFLSLPDTWMKEFFLAHIYTELQLIEEALQKYQNLIDVGFSKSSYIVSQIAVAYHNIRDIDKALSIFNELRKQDPYRIENMDTFSNLLYVRSMKSELSYLAHNLCEIDKYRVETCCVIGNYYSLRSQHEKAALYFQRALKLNPRYLGAWTLMGHEYMEMKNTSAAIQAYRHAIEVNKRDYRAWYGLGQTYEILKMPFYCLYYYRRAHQLRPNDSRMLVALGECYEKLNQLVEAKKCYWRAYAVGDVEKMALVKLAKLHEQLTESEQAAQCYIKYIQDIYSCGEIVEHLEESTAFRYLAQYYFKCKLWDEASACAQKCCAFNDTREEGKALLRQILQLRNQGETPSTEIPAPFFLPASLSANNTPTRRVSPLNLSSVTP</sequence>
<reference key="1">
    <citation type="submission" date="2006-10" db="EMBL/GenBank/DDBJ databases">
        <authorList>
            <consortium name="NIH - Mammalian Gene Collection (MGC) project"/>
        </authorList>
    </citation>
    <scope>NUCLEOTIDE SEQUENCE [LARGE SCALE MRNA]</scope>
    <source>
        <strain>Hereford</strain>
        <tissue>Fetal skin</tissue>
    </source>
</reference>
<protein>
    <recommendedName>
        <fullName>Cell division cycle protein 23 homolog</fullName>
    </recommendedName>
    <alternativeName>
        <fullName>Anaphase-promoting complex subunit 8</fullName>
        <shortName>APC8</shortName>
    </alternativeName>
    <alternativeName>
        <fullName>Cyclosome subunit 8</fullName>
    </alternativeName>
</protein>
<gene>
    <name type="primary">CDC23</name>
    <name type="synonym">ANAPC8</name>
</gene>
<comment type="function">
    <text evidence="2">Component of the anaphase promoting complex/cyclosome (APC/C), a cell cycle-regulated E3 ubiquitin ligase that controls progression through mitosis and the G1 phase of the cell cycle. The APC/C complex acts by mediating ubiquitination and subsequent degradation of target proteins: it mainly mediates the formation of 'Lys-11'-linked polyubiquitin chains and, to a lower extent, the formation of 'Lys-48'- and 'Lys-63'-linked polyubiquitin chains. The APC/C complex catalyzes assembly of branched 'Lys-11'-/'Lys-48'-linked branched ubiquitin chains on target proteins.</text>
</comment>
<comment type="pathway">
    <text evidence="2">Protein modification; protein ubiquitination.</text>
</comment>
<comment type="subunit">
    <text evidence="2">The mammalian APC/C is composed at least of 14 distinct subunits ANAPC1, ANAPC2, CDC27/APC3, ANAPC4, ANAPC5, CDC16/APC6, ANAPC7, CDC23/APC8, ANAPC10, ANAPC11, CDC26/APC12, ANAPC13, ANAPC15 and ANAPC16 that assemble into a complex of at least 19 chains with a combined molecular mass of around 1.2 MDa; APC/C interacts with FZR1 and FBXO5. Interacts with FBXO43; the interaction is direct.</text>
</comment>
<comment type="PTM">
    <text evidence="1">Phosphorylated. Phosphorylation on Thr-562 occurs specifically during mitosis (By similarity).</text>
</comment>
<comment type="similarity">
    <text evidence="3">Belongs to the APC8/CDC23 family.</text>
</comment>
<organism>
    <name type="scientific">Bos taurus</name>
    <name type="common">Bovine</name>
    <dbReference type="NCBI Taxonomy" id="9913"/>
    <lineage>
        <taxon>Eukaryota</taxon>
        <taxon>Metazoa</taxon>
        <taxon>Chordata</taxon>
        <taxon>Craniata</taxon>
        <taxon>Vertebrata</taxon>
        <taxon>Euteleostomi</taxon>
        <taxon>Mammalia</taxon>
        <taxon>Eutheria</taxon>
        <taxon>Laurasiatheria</taxon>
        <taxon>Artiodactyla</taxon>
        <taxon>Ruminantia</taxon>
        <taxon>Pecora</taxon>
        <taxon>Bovidae</taxon>
        <taxon>Bovinae</taxon>
        <taxon>Bos</taxon>
    </lineage>
</organism>
<proteinExistence type="evidence at transcript level"/>
<name>CDC23_BOVIN</name>
<feature type="initiator methionine" description="Removed" evidence="2">
    <location>
        <position position="1"/>
    </location>
</feature>
<feature type="chain" id="PRO_0000379876" description="Cell division cycle protein 23 homolog">
    <location>
        <begin position="2"/>
        <end position="597"/>
    </location>
</feature>
<feature type="repeat" description="TPR 1">
    <location>
        <begin position="27"/>
        <end position="63"/>
    </location>
</feature>
<feature type="repeat" description="TPR 2">
    <location>
        <begin position="73"/>
        <end position="112"/>
    </location>
</feature>
<feature type="repeat" description="TPR 3">
    <location>
        <begin position="114"/>
        <end position="144"/>
    </location>
</feature>
<feature type="repeat" description="TPR 4">
    <location>
        <begin position="169"/>
        <end position="200"/>
    </location>
</feature>
<feature type="repeat" description="TPR 5">
    <location>
        <begin position="229"/>
        <end position="259"/>
    </location>
</feature>
<feature type="repeat" description="TPR 6">
    <location>
        <begin position="263"/>
        <end position="293"/>
    </location>
</feature>
<feature type="repeat" description="TPR 7">
    <location>
        <begin position="297"/>
        <end position="327"/>
    </location>
</feature>
<feature type="repeat" description="TPR 8">
    <location>
        <begin position="331"/>
        <end position="361"/>
    </location>
</feature>
<feature type="repeat" description="TPR 9">
    <location>
        <begin position="366"/>
        <end position="395"/>
    </location>
</feature>
<feature type="repeat" description="TPR 10">
    <location>
        <begin position="400"/>
        <end position="432"/>
    </location>
</feature>
<feature type="repeat" description="TPR 11">
    <location>
        <begin position="433"/>
        <end position="466"/>
    </location>
</feature>
<feature type="repeat" description="TPR 12">
    <location>
        <begin position="468"/>
        <end position="500"/>
    </location>
</feature>
<feature type="repeat" description="TPR 13">
    <location>
        <begin position="504"/>
        <end position="540"/>
    </location>
</feature>
<feature type="modified residue" description="N-acetylalanine" evidence="2">
    <location>
        <position position="2"/>
    </location>
</feature>
<feature type="modified residue" description="Phosphotyrosine" evidence="2">
    <location>
        <position position="273"/>
    </location>
</feature>
<feature type="modified residue" description="N6-acetyllysine" evidence="2">
    <location>
        <position position="467"/>
    </location>
</feature>
<feature type="modified residue" description="Phosphothreonine" evidence="2">
    <location>
        <position position="562"/>
    </location>
</feature>
<feature type="modified residue" description="Phosphothreonine" evidence="2">
    <location>
        <position position="565"/>
    </location>
</feature>
<feature type="modified residue" description="Phosphoserine" evidence="2">
    <location>
        <position position="578"/>
    </location>
</feature>
<feature type="modified residue" description="Phosphothreonine" evidence="2">
    <location>
        <position position="582"/>
    </location>
</feature>
<feature type="modified residue" description="Phosphoserine" evidence="2">
    <location>
        <position position="588"/>
    </location>
</feature>
<feature type="modified residue" description="Phosphoserine" evidence="2">
    <location>
        <position position="593"/>
    </location>
</feature>
<feature type="modified residue" description="Phosphothreonine" evidence="2">
    <location>
        <position position="596"/>
    </location>
</feature>
<feature type="cross-link" description="Glycyl lysine isopeptide (Lys-Gly) (interchain with G-Cter in SUMO2)" evidence="2">
    <location>
        <position position="147"/>
    </location>
</feature>
<keyword id="KW-0007">Acetylation</keyword>
<keyword id="KW-0131">Cell cycle</keyword>
<keyword id="KW-0132">Cell division</keyword>
<keyword id="KW-1017">Isopeptide bond</keyword>
<keyword id="KW-0498">Mitosis</keyword>
<keyword id="KW-0597">Phosphoprotein</keyword>
<keyword id="KW-1185">Reference proteome</keyword>
<keyword id="KW-0677">Repeat</keyword>
<keyword id="KW-0802">TPR repeat</keyword>
<keyword id="KW-0832">Ubl conjugation</keyword>
<keyword id="KW-0833">Ubl conjugation pathway</keyword>
<accession>A1A4R8</accession>